<protein>
    <recommendedName>
        <fullName evidence="1">Lysine--tRNA ligase</fullName>
        <ecNumber evidence="1">6.1.1.6</ecNumber>
    </recommendedName>
    <alternativeName>
        <fullName evidence="1">Lysyl-tRNA synthetase</fullName>
        <shortName evidence="1">LysRS</shortName>
    </alternativeName>
</protein>
<evidence type="ECO:0000255" key="1">
    <source>
        <dbReference type="HAMAP-Rule" id="MF_00252"/>
    </source>
</evidence>
<reference key="1">
    <citation type="submission" date="2008-02" db="EMBL/GenBank/DDBJ databases">
        <title>Complete sequence of Pseudomonas putida W619.</title>
        <authorList>
            <person name="Copeland A."/>
            <person name="Lucas S."/>
            <person name="Lapidus A."/>
            <person name="Barry K."/>
            <person name="Detter J.C."/>
            <person name="Glavina del Rio T."/>
            <person name="Dalin E."/>
            <person name="Tice H."/>
            <person name="Pitluck S."/>
            <person name="Chain P."/>
            <person name="Malfatti S."/>
            <person name="Shin M."/>
            <person name="Vergez L."/>
            <person name="Schmutz J."/>
            <person name="Larimer F."/>
            <person name="Land M."/>
            <person name="Hauser L."/>
            <person name="Kyrpides N."/>
            <person name="Kim E."/>
            <person name="Taghavi S."/>
            <person name="Vangronsveld D."/>
            <person name="van der Lelie D."/>
            <person name="Richardson P."/>
        </authorList>
    </citation>
    <scope>NUCLEOTIDE SEQUENCE [LARGE SCALE GENOMIC DNA]</scope>
    <source>
        <strain>W619</strain>
    </source>
</reference>
<organism>
    <name type="scientific">Pseudomonas putida (strain W619)</name>
    <dbReference type="NCBI Taxonomy" id="390235"/>
    <lineage>
        <taxon>Bacteria</taxon>
        <taxon>Pseudomonadati</taxon>
        <taxon>Pseudomonadota</taxon>
        <taxon>Gammaproteobacteria</taxon>
        <taxon>Pseudomonadales</taxon>
        <taxon>Pseudomonadaceae</taxon>
        <taxon>Pseudomonas</taxon>
    </lineage>
</organism>
<keyword id="KW-0030">Aminoacyl-tRNA synthetase</keyword>
<keyword id="KW-0067">ATP-binding</keyword>
<keyword id="KW-0963">Cytoplasm</keyword>
<keyword id="KW-0436">Ligase</keyword>
<keyword id="KW-0460">Magnesium</keyword>
<keyword id="KW-0479">Metal-binding</keyword>
<keyword id="KW-0547">Nucleotide-binding</keyword>
<keyword id="KW-0648">Protein biosynthesis</keyword>
<dbReference type="EC" id="6.1.1.6" evidence="1"/>
<dbReference type="EMBL" id="CP000949">
    <property type="protein sequence ID" value="ACA74601.1"/>
    <property type="molecule type" value="Genomic_DNA"/>
</dbReference>
<dbReference type="SMR" id="B1JD39"/>
<dbReference type="STRING" id="390235.PputW619_4121"/>
<dbReference type="KEGG" id="ppw:PputW619_4121"/>
<dbReference type="eggNOG" id="COG1190">
    <property type="taxonomic scope" value="Bacteria"/>
</dbReference>
<dbReference type="HOGENOM" id="CLU_008255_6_0_6"/>
<dbReference type="OrthoDB" id="9801152at2"/>
<dbReference type="GO" id="GO:0005829">
    <property type="term" value="C:cytosol"/>
    <property type="evidence" value="ECO:0007669"/>
    <property type="project" value="TreeGrafter"/>
</dbReference>
<dbReference type="GO" id="GO:0005524">
    <property type="term" value="F:ATP binding"/>
    <property type="evidence" value="ECO:0007669"/>
    <property type="project" value="UniProtKB-UniRule"/>
</dbReference>
<dbReference type="GO" id="GO:0004824">
    <property type="term" value="F:lysine-tRNA ligase activity"/>
    <property type="evidence" value="ECO:0007669"/>
    <property type="project" value="UniProtKB-UniRule"/>
</dbReference>
<dbReference type="GO" id="GO:0000287">
    <property type="term" value="F:magnesium ion binding"/>
    <property type="evidence" value="ECO:0007669"/>
    <property type="project" value="UniProtKB-UniRule"/>
</dbReference>
<dbReference type="GO" id="GO:0000049">
    <property type="term" value="F:tRNA binding"/>
    <property type="evidence" value="ECO:0007669"/>
    <property type="project" value="TreeGrafter"/>
</dbReference>
<dbReference type="GO" id="GO:0006430">
    <property type="term" value="P:lysyl-tRNA aminoacylation"/>
    <property type="evidence" value="ECO:0007669"/>
    <property type="project" value="UniProtKB-UniRule"/>
</dbReference>
<dbReference type="CDD" id="cd00775">
    <property type="entry name" value="LysRS_core"/>
    <property type="match status" value="1"/>
</dbReference>
<dbReference type="CDD" id="cd04322">
    <property type="entry name" value="LysRS_N"/>
    <property type="match status" value="1"/>
</dbReference>
<dbReference type="FunFam" id="2.40.50.140:FF:000024">
    <property type="entry name" value="Lysine--tRNA ligase"/>
    <property type="match status" value="1"/>
</dbReference>
<dbReference type="FunFam" id="3.30.930.10:FF:000001">
    <property type="entry name" value="Lysine--tRNA ligase"/>
    <property type="match status" value="1"/>
</dbReference>
<dbReference type="Gene3D" id="3.30.930.10">
    <property type="entry name" value="Bira Bifunctional Protein, Domain 2"/>
    <property type="match status" value="1"/>
</dbReference>
<dbReference type="Gene3D" id="2.40.50.140">
    <property type="entry name" value="Nucleic acid-binding proteins"/>
    <property type="match status" value="1"/>
</dbReference>
<dbReference type="HAMAP" id="MF_00252">
    <property type="entry name" value="Lys_tRNA_synth_class2"/>
    <property type="match status" value="1"/>
</dbReference>
<dbReference type="InterPro" id="IPR004364">
    <property type="entry name" value="Aa-tRNA-synt_II"/>
</dbReference>
<dbReference type="InterPro" id="IPR006195">
    <property type="entry name" value="aa-tRNA-synth_II"/>
</dbReference>
<dbReference type="InterPro" id="IPR045864">
    <property type="entry name" value="aa-tRNA-synth_II/BPL/LPL"/>
</dbReference>
<dbReference type="InterPro" id="IPR002313">
    <property type="entry name" value="Lys-tRNA-ligase_II"/>
</dbReference>
<dbReference type="InterPro" id="IPR044136">
    <property type="entry name" value="Lys-tRNA-ligase_II_N"/>
</dbReference>
<dbReference type="InterPro" id="IPR018149">
    <property type="entry name" value="Lys-tRNA-synth_II_C"/>
</dbReference>
<dbReference type="InterPro" id="IPR012340">
    <property type="entry name" value="NA-bd_OB-fold"/>
</dbReference>
<dbReference type="InterPro" id="IPR004365">
    <property type="entry name" value="NA-bd_OB_tRNA"/>
</dbReference>
<dbReference type="NCBIfam" id="TIGR00499">
    <property type="entry name" value="lysS_bact"/>
    <property type="match status" value="1"/>
</dbReference>
<dbReference type="NCBIfam" id="NF001756">
    <property type="entry name" value="PRK00484.1"/>
    <property type="match status" value="1"/>
</dbReference>
<dbReference type="PANTHER" id="PTHR42918:SF15">
    <property type="entry name" value="LYSINE--TRNA LIGASE, CHLOROPLASTIC_MITOCHONDRIAL"/>
    <property type="match status" value="1"/>
</dbReference>
<dbReference type="PANTHER" id="PTHR42918">
    <property type="entry name" value="LYSYL-TRNA SYNTHETASE"/>
    <property type="match status" value="1"/>
</dbReference>
<dbReference type="Pfam" id="PF00152">
    <property type="entry name" value="tRNA-synt_2"/>
    <property type="match status" value="1"/>
</dbReference>
<dbReference type="Pfam" id="PF01336">
    <property type="entry name" value="tRNA_anti-codon"/>
    <property type="match status" value="1"/>
</dbReference>
<dbReference type="PRINTS" id="PR00982">
    <property type="entry name" value="TRNASYNTHLYS"/>
</dbReference>
<dbReference type="SUPFAM" id="SSF55681">
    <property type="entry name" value="Class II aaRS and biotin synthetases"/>
    <property type="match status" value="1"/>
</dbReference>
<dbReference type="SUPFAM" id="SSF50249">
    <property type="entry name" value="Nucleic acid-binding proteins"/>
    <property type="match status" value="1"/>
</dbReference>
<dbReference type="PROSITE" id="PS50862">
    <property type="entry name" value="AA_TRNA_LIGASE_II"/>
    <property type="match status" value="1"/>
</dbReference>
<name>SYK_PSEPW</name>
<proteinExistence type="inferred from homology"/>
<sequence length="500" mass="57196">MSDLKTESQDLQQEENTLIALRKEKLAAEREKGQAFPNDFRRDSYCNDLQKQYVDKTKEELEAAAIPVKVAGRIMLNRGSFMVIQDMTGRIQVYVNRKTLPEETLAAVKTWDLGDIIAAEGTLARSGKGDLYVEMTNVRLLTKSLRPLPDKHHGLTDTEQRYRQRYVDLMVNEETRHTFRVRSQVISHIRKFLIDRDFLEVETPMLQTIPGGAAAKPFETHHNALDMAMFLRIAPELYLKRLVVGGFEKVFEINRNFRNEGVSTRHNPEFTMLEFYQAYADYRDNMDLTEELFRELAQLVLGSTDVPYGDKVFHFGEPFVRLSVFDSILKYNPELTAADLQDVDRARDIAKKAGAKVLGHEGLGKLQVMIFEELVEHKLEQPHFITEYPFEVSPLARRNDDNPAVTDRFELFIGGREIANAYSELNDAEDQAERFLAQVAEKDAGDDEAMHYDADFVRALEYGMPPTAGEGIGIDRLVMLLTNSPSIRDVILFPHMRPQA</sequence>
<accession>B1JD39</accession>
<comment type="catalytic activity">
    <reaction evidence="1">
        <text>tRNA(Lys) + L-lysine + ATP = L-lysyl-tRNA(Lys) + AMP + diphosphate</text>
        <dbReference type="Rhea" id="RHEA:20792"/>
        <dbReference type="Rhea" id="RHEA-COMP:9696"/>
        <dbReference type="Rhea" id="RHEA-COMP:9697"/>
        <dbReference type="ChEBI" id="CHEBI:30616"/>
        <dbReference type="ChEBI" id="CHEBI:32551"/>
        <dbReference type="ChEBI" id="CHEBI:33019"/>
        <dbReference type="ChEBI" id="CHEBI:78442"/>
        <dbReference type="ChEBI" id="CHEBI:78529"/>
        <dbReference type="ChEBI" id="CHEBI:456215"/>
        <dbReference type="EC" id="6.1.1.6"/>
    </reaction>
</comment>
<comment type="cofactor">
    <cofactor evidence="1">
        <name>Mg(2+)</name>
        <dbReference type="ChEBI" id="CHEBI:18420"/>
    </cofactor>
    <text evidence="1">Binds 3 Mg(2+) ions per subunit.</text>
</comment>
<comment type="subunit">
    <text evidence="1">Homodimer.</text>
</comment>
<comment type="subcellular location">
    <subcellularLocation>
        <location evidence="1">Cytoplasm</location>
    </subcellularLocation>
</comment>
<comment type="similarity">
    <text evidence="1">Belongs to the class-II aminoacyl-tRNA synthetase family.</text>
</comment>
<feature type="chain" id="PRO_1000101136" description="Lysine--tRNA ligase">
    <location>
        <begin position="1"/>
        <end position="500"/>
    </location>
</feature>
<feature type="binding site" evidence="1">
    <location>
        <position position="410"/>
    </location>
    <ligand>
        <name>Mg(2+)</name>
        <dbReference type="ChEBI" id="CHEBI:18420"/>
        <label>1</label>
    </ligand>
</feature>
<feature type="binding site" evidence="1">
    <location>
        <position position="417"/>
    </location>
    <ligand>
        <name>Mg(2+)</name>
        <dbReference type="ChEBI" id="CHEBI:18420"/>
        <label>1</label>
    </ligand>
</feature>
<feature type="binding site" evidence="1">
    <location>
        <position position="417"/>
    </location>
    <ligand>
        <name>Mg(2+)</name>
        <dbReference type="ChEBI" id="CHEBI:18420"/>
        <label>2</label>
    </ligand>
</feature>
<gene>
    <name evidence="1" type="primary">lysS</name>
    <name type="ordered locus">PputW619_4121</name>
</gene>